<reference key="1">
    <citation type="journal article" date="2002" name="Nucleic Acids Res.">
        <title>Genome sequence of Shigella flexneri 2a: insights into pathogenicity through comparison with genomes of Escherichia coli K12 and O157.</title>
        <authorList>
            <person name="Jin Q."/>
            <person name="Yuan Z."/>
            <person name="Xu J."/>
            <person name="Wang Y."/>
            <person name="Shen Y."/>
            <person name="Lu W."/>
            <person name="Wang J."/>
            <person name="Liu H."/>
            <person name="Yang J."/>
            <person name="Yang F."/>
            <person name="Zhang X."/>
            <person name="Zhang J."/>
            <person name="Yang G."/>
            <person name="Wu H."/>
            <person name="Qu D."/>
            <person name="Dong J."/>
            <person name="Sun L."/>
            <person name="Xue Y."/>
            <person name="Zhao A."/>
            <person name="Gao Y."/>
            <person name="Zhu J."/>
            <person name="Kan B."/>
            <person name="Ding K."/>
            <person name="Chen S."/>
            <person name="Cheng H."/>
            <person name="Yao Z."/>
            <person name="He B."/>
            <person name="Chen R."/>
            <person name="Ma D."/>
            <person name="Qiang B."/>
            <person name="Wen Y."/>
            <person name="Hou Y."/>
            <person name="Yu J."/>
        </authorList>
    </citation>
    <scope>NUCLEOTIDE SEQUENCE [LARGE SCALE GENOMIC DNA]</scope>
    <source>
        <strain>301 / Serotype 2a</strain>
    </source>
</reference>
<reference key="2">
    <citation type="journal article" date="2003" name="Infect. Immun.">
        <title>Complete genome sequence and comparative genomics of Shigella flexneri serotype 2a strain 2457T.</title>
        <authorList>
            <person name="Wei J."/>
            <person name="Goldberg M.B."/>
            <person name="Burland V."/>
            <person name="Venkatesan M.M."/>
            <person name="Deng W."/>
            <person name="Fournier G."/>
            <person name="Mayhew G.F."/>
            <person name="Plunkett G. III"/>
            <person name="Rose D.J."/>
            <person name="Darling A."/>
            <person name="Mau B."/>
            <person name="Perna N.T."/>
            <person name="Payne S.M."/>
            <person name="Runyen-Janecky L.J."/>
            <person name="Zhou S."/>
            <person name="Schwartz D.C."/>
            <person name="Blattner F.R."/>
        </authorList>
    </citation>
    <scope>NUCLEOTIDE SEQUENCE [LARGE SCALE GENOMIC DNA]</scope>
    <source>
        <strain>ATCC 700930 / 2457T / Serotype 2a</strain>
    </source>
</reference>
<gene>
    <name type="primary">ylaC</name>
    <name type="ordered locus">SF0403</name>
    <name type="ordered locus">S0410</name>
</gene>
<organism>
    <name type="scientific">Shigella flexneri</name>
    <dbReference type="NCBI Taxonomy" id="623"/>
    <lineage>
        <taxon>Bacteria</taxon>
        <taxon>Pseudomonadati</taxon>
        <taxon>Pseudomonadota</taxon>
        <taxon>Gammaproteobacteria</taxon>
        <taxon>Enterobacterales</taxon>
        <taxon>Enterobacteriaceae</taxon>
        <taxon>Shigella</taxon>
    </lineage>
</organism>
<evidence type="ECO:0000250" key="1"/>
<evidence type="ECO:0000255" key="2"/>
<comment type="subcellular location">
    <subcellularLocation>
        <location evidence="1">Cell inner membrane</location>
        <topology evidence="1">Multi-pass membrane protein</topology>
    </subcellularLocation>
</comment>
<proteinExistence type="inferred from homology"/>
<protein>
    <recommendedName>
        <fullName>Inner membrane protein YlaC</fullName>
    </recommendedName>
</protein>
<feature type="chain" id="PRO_0000168636" description="Inner membrane protein YlaC">
    <location>
        <begin position="1"/>
        <end position="156"/>
    </location>
</feature>
<feature type="topological domain" description="Cytoplasmic" evidence="2">
    <location>
        <begin position="1"/>
        <end position="35"/>
    </location>
</feature>
<feature type="transmembrane region" description="Helical" evidence="2">
    <location>
        <begin position="36"/>
        <end position="56"/>
    </location>
</feature>
<feature type="topological domain" description="Periplasmic" evidence="2">
    <location>
        <begin position="57"/>
        <end position="58"/>
    </location>
</feature>
<feature type="transmembrane region" description="Helical" evidence="2">
    <location>
        <begin position="59"/>
        <end position="79"/>
    </location>
</feature>
<feature type="topological domain" description="Cytoplasmic" evidence="2">
    <location>
        <begin position="80"/>
        <end position="156"/>
    </location>
</feature>
<sequence length="156" mass="18267">MTEIQRLLTETIESLNTREKRDNKPRFSISFIRKHPGLFIGMYVAFFATLAVMLQSETLSGSVWLLVVLFILLNGFFFFDVYPRYRYEDIDVLDFRVCYNGEWYNTRFVPAALVEAILNSPRVADVHKEQLQKMIVRKGELSFYDIFTLARAESTS</sequence>
<name>YLAC_SHIFL</name>
<accession>P0AAS2</accession>
<accession>P77523</accession>
<keyword id="KW-0997">Cell inner membrane</keyword>
<keyword id="KW-1003">Cell membrane</keyword>
<keyword id="KW-0472">Membrane</keyword>
<keyword id="KW-1185">Reference proteome</keyword>
<keyword id="KW-0812">Transmembrane</keyword>
<keyword id="KW-1133">Transmembrane helix</keyword>
<dbReference type="EMBL" id="AE005674">
    <property type="protein sequence ID" value="AAN42059.2"/>
    <property type="molecule type" value="Genomic_DNA"/>
</dbReference>
<dbReference type="EMBL" id="AE014073">
    <property type="protein sequence ID" value="AAP15936.1"/>
    <property type="molecule type" value="Genomic_DNA"/>
</dbReference>
<dbReference type="RefSeq" id="NP_706352.2">
    <property type="nucleotide sequence ID" value="NC_004337.2"/>
</dbReference>
<dbReference type="RefSeq" id="WP_000136192.1">
    <property type="nucleotide sequence ID" value="NZ_WPGW01000015.1"/>
</dbReference>
<dbReference type="PaxDb" id="198214-SF0403"/>
<dbReference type="GeneID" id="1027725"/>
<dbReference type="KEGG" id="sfl:SF0403"/>
<dbReference type="KEGG" id="sfx:S0410"/>
<dbReference type="PATRIC" id="fig|198214.7.peg.462"/>
<dbReference type="HOGENOM" id="CLU_134298_0_0_6"/>
<dbReference type="Proteomes" id="UP000001006">
    <property type="component" value="Chromosome"/>
</dbReference>
<dbReference type="Proteomes" id="UP000002673">
    <property type="component" value="Chromosome"/>
</dbReference>
<dbReference type="GO" id="GO:0005886">
    <property type="term" value="C:plasma membrane"/>
    <property type="evidence" value="ECO:0007669"/>
    <property type="project" value="UniProtKB-SubCell"/>
</dbReference>
<dbReference type="InterPro" id="IPR019713">
    <property type="entry name" value="Memb_YlaC"/>
</dbReference>
<dbReference type="Pfam" id="PF10777">
    <property type="entry name" value="YlaC"/>
    <property type="match status" value="1"/>
</dbReference>